<organism>
    <name type="scientific">Acinetobacter baumannii (strain AYE)</name>
    <dbReference type="NCBI Taxonomy" id="509173"/>
    <lineage>
        <taxon>Bacteria</taxon>
        <taxon>Pseudomonadati</taxon>
        <taxon>Pseudomonadota</taxon>
        <taxon>Gammaproteobacteria</taxon>
        <taxon>Moraxellales</taxon>
        <taxon>Moraxellaceae</taxon>
        <taxon>Acinetobacter</taxon>
        <taxon>Acinetobacter calcoaceticus/baumannii complex</taxon>
    </lineage>
</organism>
<accession>B0VDM7</accession>
<name>PDXB_ACIBY</name>
<feature type="chain" id="PRO_1000188255" description="Erythronate-4-phosphate dehydrogenase">
    <location>
        <begin position="1"/>
        <end position="355"/>
    </location>
</feature>
<feature type="active site" evidence="1">
    <location>
        <position position="206"/>
    </location>
</feature>
<feature type="active site" evidence="1">
    <location>
        <position position="234"/>
    </location>
</feature>
<feature type="active site" description="Proton donor" evidence="1">
    <location>
        <position position="251"/>
    </location>
</feature>
<feature type="binding site" evidence="1">
    <location>
        <position position="45"/>
    </location>
    <ligand>
        <name>substrate</name>
    </ligand>
</feature>
<feature type="binding site" evidence="1">
    <location>
        <position position="66"/>
    </location>
    <ligand>
        <name>substrate</name>
    </ligand>
</feature>
<feature type="binding site" evidence="1">
    <location>
        <position position="146"/>
    </location>
    <ligand>
        <name>NAD(+)</name>
        <dbReference type="ChEBI" id="CHEBI:57540"/>
    </ligand>
</feature>
<feature type="binding site" evidence="1">
    <location>
        <position position="229"/>
    </location>
    <ligand>
        <name>NAD(+)</name>
        <dbReference type="ChEBI" id="CHEBI:57540"/>
    </ligand>
</feature>
<feature type="binding site" evidence="1">
    <location>
        <position position="254"/>
    </location>
    <ligand>
        <name>NAD(+)</name>
        <dbReference type="ChEBI" id="CHEBI:57540"/>
    </ligand>
</feature>
<feature type="binding site" evidence="1">
    <location>
        <position position="255"/>
    </location>
    <ligand>
        <name>substrate</name>
    </ligand>
</feature>
<reference key="1">
    <citation type="journal article" date="2008" name="PLoS ONE">
        <title>Comparative analysis of Acinetobacters: three genomes for three lifestyles.</title>
        <authorList>
            <person name="Vallenet D."/>
            <person name="Nordmann P."/>
            <person name="Barbe V."/>
            <person name="Poirel L."/>
            <person name="Mangenot S."/>
            <person name="Bataille E."/>
            <person name="Dossat C."/>
            <person name="Gas S."/>
            <person name="Kreimeyer A."/>
            <person name="Lenoble P."/>
            <person name="Oztas S."/>
            <person name="Poulain J."/>
            <person name="Segurens B."/>
            <person name="Robert C."/>
            <person name="Abergel C."/>
            <person name="Claverie J.-M."/>
            <person name="Raoult D."/>
            <person name="Medigue C."/>
            <person name="Weissenbach J."/>
            <person name="Cruveiller S."/>
        </authorList>
    </citation>
    <scope>NUCLEOTIDE SEQUENCE [LARGE SCALE GENOMIC DNA]</scope>
    <source>
        <strain>AYE</strain>
    </source>
</reference>
<comment type="function">
    <text evidence="1">Catalyzes the oxidation of erythronate-4-phosphate to 3-hydroxy-2-oxo-4-phosphonooxybutanoate.</text>
</comment>
<comment type="catalytic activity">
    <reaction evidence="1">
        <text>4-phospho-D-erythronate + NAD(+) = (R)-3-hydroxy-2-oxo-4-phosphooxybutanoate + NADH + H(+)</text>
        <dbReference type="Rhea" id="RHEA:18829"/>
        <dbReference type="ChEBI" id="CHEBI:15378"/>
        <dbReference type="ChEBI" id="CHEBI:57540"/>
        <dbReference type="ChEBI" id="CHEBI:57945"/>
        <dbReference type="ChEBI" id="CHEBI:58538"/>
        <dbReference type="ChEBI" id="CHEBI:58766"/>
        <dbReference type="EC" id="1.1.1.290"/>
    </reaction>
</comment>
<comment type="pathway">
    <text evidence="1">Cofactor biosynthesis; pyridoxine 5'-phosphate biosynthesis; pyridoxine 5'-phosphate from D-erythrose 4-phosphate: step 2/5.</text>
</comment>
<comment type="subunit">
    <text evidence="1">Homodimer.</text>
</comment>
<comment type="subcellular location">
    <subcellularLocation>
        <location evidence="1">Cytoplasm</location>
    </subcellularLocation>
</comment>
<comment type="similarity">
    <text evidence="1">Belongs to the D-isomer specific 2-hydroxyacid dehydrogenase family. PdxB subfamily.</text>
</comment>
<sequence>MKIVADENLAFTDYFFSEFGDIQHKAGRTLTHTDVQDAEALLVRSVTAVNESLIQNTALKYVGSATIGTDHLDIQALEKHGITWANAAGCNAQAVAEYVITALLHLDASLLEQQEKFTLGIVGLGNVGKRLVYMAQLLGWKVIGFDPYVQLDSIENVSFQALLQQANAVSIHVPLTKKGEHATYHLFDEKAFAALQPNTILINSARGPVVKEAALIEDIQRTQRKVVLDVFEHEPVISEELLNMLALATPHIAGYSLEGKARGTQMIYEAFCQKFGYEINKRFETQLPACEDYFSGHDLKAVLKQKLSQIYDIAQDDANIRACVKEGKVEQKAFDLLRKNYPLRREWAAHGGPQA</sequence>
<proteinExistence type="inferred from homology"/>
<protein>
    <recommendedName>
        <fullName evidence="1">Erythronate-4-phosphate dehydrogenase</fullName>
        <ecNumber evidence="1">1.1.1.290</ecNumber>
    </recommendedName>
</protein>
<keyword id="KW-0963">Cytoplasm</keyword>
<keyword id="KW-0520">NAD</keyword>
<keyword id="KW-0560">Oxidoreductase</keyword>
<keyword id="KW-0664">Pyridoxine biosynthesis</keyword>
<evidence type="ECO:0000255" key="1">
    <source>
        <dbReference type="HAMAP-Rule" id="MF_01825"/>
    </source>
</evidence>
<dbReference type="EC" id="1.1.1.290" evidence="1"/>
<dbReference type="EMBL" id="CU459141">
    <property type="protein sequence ID" value="CAM85804.1"/>
    <property type="molecule type" value="Genomic_DNA"/>
</dbReference>
<dbReference type="RefSeq" id="WP_000706080.1">
    <property type="nucleotide sequence ID" value="NZ_JBDGFB010000021.1"/>
</dbReference>
<dbReference type="SMR" id="B0VDM7"/>
<dbReference type="EnsemblBacteria" id="CAM85804">
    <property type="protein sequence ID" value="CAM85804"/>
    <property type="gene ID" value="ABAYE0853"/>
</dbReference>
<dbReference type="KEGG" id="aby:ABAYE0853"/>
<dbReference type="HOGENOM" id="CLU_019796_4_0_6"/>
<dbReference type="UniPathway" id="UPA00244">
    <property type="reaction ID" value="UER00310"/>
</dbReference>
<dbReference type="GO" id="GO:0005829">
    <property type="term" value="C:cytosol"/>
    <property type="evidence" value="ECO:0007669"/>
    <property type="project" value="TreeGrafter"/>
</dbReference>
<dbReference type="GO" id="GO:0033711">
    <property type="term" value="F:4-phosphoerythronate dehydrogenase activity"/>
    <property type="evidence" value="ECO:0007669"/>
    <property type="project" value="UniProtKB-EC"/>
</dbReference>
<dbReference type="GO" id="GO:0051287">
    <property type="term" value="F:NAD binding"/>
    <property type="evidence" value="ECO:0007669"/>
    <property type="project" value="InterPro"/>
</dbReference>
<dbReference type="GO" id="GO:0046983">
    <property type="term" value="F:protein dimerization activity"/>
    <property type="evidence" value="ECO:0007669"/>
    <property type="project" value="InterPro"/>
</dbReference>
<dbReference type="GO" id="GO:0036001">
    <property type="term" value="P:'de novo' pyridoxal 5'-phosphate biosynthetic process"/>
    <property type="evidence" value="ECO:0007669"/>
    <property type="project" value="TreeGrafter"/>
</dbReference>
<dbReference type="GO" id="GO:0008615">
    <property type="term" value="P:pyridoxine biosynthetic process"/>
    <property type="evidence" value="ECO:0007669"/>
    <property type="project" value="UniProtKB-UniRule"/>
</dbReference>
<dbReference type="CDD" id="cd12158">
    <property type="entry name" value="ErythrP_dh"/>
    <property type="match status" value="1"/>
</dbReference>
<dbReference type="Gene3D" id="3.30.1370.170">
    <property type="match status" value="1"/>
</dbReference>
<dbReference type="Gene3D" id="3.40.50.720">
    <property type="entry name" value="NAD(P)-binding Rossmann-like Domain"/>
    <property type="match status" value="2"/>
</dbReference>
<dbReference type="HAMAP" id="MF_01825">
    <property type="entry name" value="PdxB"/>
    <property type="match status" value="1"/>
</dbReference>
<dbReference type="InterPro" id="IPR006139">
    <property type="entry name" value="D-isomer_2_OHA_DH_cat_dom"/>
</dbReference>
<dbReference type="InterPro" id="IPR029752">
    <property type="entry name" value="D-isomer_DH_CS1"/>
</dbReference>
<dbReference type="InterPro" id="IPR006140">
    <property type="entry name" value="D-isomer_DH_NAD-bd"/>
</dbReference>
<dbReference type="InterPro" id="IPR020921">
    <property type="entry name" value="Erythronate-4-P_DHase"/>
</dbReference>
<dbReference type="InterPro" id="IPR024531">
    <property type="entry name" value="Erythronate-4-P_DHase_dimer"/>
</dbReference>
<dbReference type="InterPro" id="IPR036291">
    <property type="entry name" value="NAD(P)-bd_dom_sf"/>
</dbReference>
<dbReference type="InterPro" id="IPR038251">
    <property type="entry name" value="PdxB_dimer_sf"/>
</dbReference>
<dbReference type="PANTHER" id="PTHR42938">
    <property type="entry name" value="FORMATE DEHYDROGENASE 1"/>
    <property type="match status" value="1"/>
</dbReference>
<dbReference type="PANTHER" id="PTHR42938:SF9">
    <property type="entry name" value="FORMATE DEHYDROGENASE 1"/>
    <property type="match status" value="1"/>
</dbReference>
<dbReference type="Pfam" id="PF00389">
    <property type="entry name" value="2-Hacid_dh"/>
    <property type="match status" value="1"/>
</dbReference>
<dbReference type="Pfam" id="PF02826">
    <property type="entry name" value="2-Hacid_dh_C"/>
    <property type="match status" value="1"/>
</dbReference>
<dbReference type="Pfam" id="PF11890">
    <property type="entry name" value="DUF3410"/>
    <property type="match status" value="1"/>
</dbReference>
<dbReference type="SUPFAM" id="SSF52283">
    <property type="entry name" value="Formate/glycerate dehydrogenase catalytic domain-like"/>
    <property type="match status" value="1"/>
</dbReference>
<dbReference type="SUPFAM" id="SSF51735">
    <property type="entry name" value="NAD(P)-binding Rossmann-fold domains"/>
    <property type="match status" value="1"/>
</dbReference>
<dbReference type="PROSITE" id="PS00065">
    <property type="entry name" value="D_2_HYDROXYACID_DH_1"/>
    <property type="match status" value="1"/>
</dbReference>
<gene>
    <name evidence="1" type="primary">pdxB</name>
    <name type="ordered locus">ABAYE0853</name>
</gene>